<reference key="1">
    <citation type="submission" date="2007-12" db="EMBL/GenBank/DDBJ databases">
        <title>Complete sequence of Methylobacterium extorquens PA1.</title>
        <authorList>
            <consortium name="US DOE Joint Genome Institute"/>
            <person name="Copeland A."/>
            <person name="Lucas S."/>
            <person name="Lapidus A."/>
            <person name="Barry K."/>
            <person name="Glavina del Rio T."/>
            <person name="Dalin E."/>
            <person name="Tice H."/>
            <person name="Pitluck S."/>
            <person name="Saunders E."/>
            <person name="Brettin T."/>
            <person name="Bruce D."/>
            <person name="Detter J.C."/>
            <person name="Han C."/>
            <person name="Schmutz J."/>
            <person name="Larimer F."/>
            <person name="Land M."/>
            <person name="Hauser L."/>
            <person name="Kyrpides N."/>
            <person name="Kim E."/>
            <person name="Marx C."/>
            <person name="Richardson P."/>
        </authorList>
    </citation>
    <scope>NUCLEOTIDE SEQUENCE [LARGE SCALE GENOMIC DNA]</scope>
    <source>
        <strain>PA1</strain>
    </source>
</reference>
<feature type="chain" id="PRO_0000402757" description="3-aminoacrylate deaminase RutC">
    <location>
        <begin position="1"/>
        <end position="130"/>
    </location>
</feature>
<proteinExistence type="inferred from homology"/>
<gene>
    <name evidence="1" type="primary">rutC</name>
    <name type="ordered locus">Mext_1736</name>
</gene>
<comment type="function">
    <text evidence="1">Involved in pyrimidine catabolism. Catalyzes the deamination of 3-aminoacrylate to malonic semialdehyde, a reaction that can also occur spontaneously. RutC may facilitate the reaction and modulate the metabolic fitness, rather than catalyzing essential functions.</text>
</comment>
<comment type="catalytic activity">
    <reaction evidence="1">
        <text>(Z)-3-aminoacrylate + H2O + H(+) = 3-oxopropanoate + NH4(+)</text>
        <dbReference type="Rhea" id="RHEA:34947"/>
        <dbReference type="ChEBI" id="CHEBI:15377"/>
        <dbReference type="ChEBI" id="CHEBI:15378"/>
        <dbReference type="ChEBI" id="CHEBI:28938"/>
        <dbReference type="ChEBI" id="CHEBI:33190"/>
        <dbReference type="ChEBI" id="CHEBI:59894"/>
    </reaction>
</comment>
<comment type="similarity">
    <text evidence="1">Belongs to the RutC family.</text>
</comment>
<accession>A9W3H9</accession>
<evidence type="ECO:0000255" key="1">
    <source>
        <dbReference type="HAMAP-Rule" id="MF_00831"/>
    </source>
</evidence>
<organism>
    <name type="scientific">Methylorubrum extorquens (strain PA1)</name>
    <name type="common">Methylobacterium extorquens</name>
    <dbReference type="NCBI Taxonomy" id="419610"/>
    <lineage>
        <taxon>Bacteria</taxon>
        <taxon>Pseudomonadati</taxon>
        <taxon>Pseudomonadota</taxon>
        <taxon>Alphaproteobacteria</taxon>
        <taxon>Hyphomicrobiales</taxon>
        <taxon>Methylobacteriaceae</taxon>
        <taxon>Methylorubrum</taxon>
    </lineage>
</organism>
<sequence length="130" mass="13575">MPKTVVIPPGTGKPLAPYVPGTLADGVLYVSGTLPLDAEANVVHEGDAGAQTRHVLETIKGVVEAAGGSMDDVTFNHIFLKDWADYGAINAVYATYFPGEKPARYCIQCGLVKPTALVEIASVAHIGKPA</sequence>
<keyword id="KW-0378">Hydrolase</keyword>
<protein>
    <recommendedName>
        <fullName evidence="1">3-aminoacrylate deaminase RutC</fullName>
        <shortName evidence="1">3-AA deaminase</shortName>
        <ecNumber evidence="1">3.5.-.-</ecNumber>
    </recommendedName>
</protein>
<dbReference type="EC" id="3.5.-.-" evidence="1"/>
<dbReference type="EMBL" id="CP000908">
    <property type="protein sequence ID" value="ABY30135.1"/>
    <property type="molecule type" value="Genomic_DNA"/>
</dbReference>
<dbReference type="RefSeq" id="WP_012253315.1">
    <property type="nucleotide sequence ID" value="NC_010172.1"/>
</dbReference>
<dbReference type="SMR" id="A9W3H9"/>
<dbReference type="GeneID" id="72989393"/>
<dbReference type="KEGG" id="mex:Mext_1736"/>
<dbReference type="eggNOG" id="COG0251">
    <property type="taxonomic scope" value="Bacteria"/>
</dbReference>
<dbReference type="HOGENOM" id="CLU_100715_7_3_5"/>
<dbReference type="BioCyc" id="MEXT419610:MEXT_RS08810-MONOMER"/>
<dbReference type="GO" id="GO:0005829">
    <property type="term" value="C:cytosol"/>
    <property type="evidence" value="ECO:0007669"/>
    <property type="project" value="TreeGrafter"/>
</dbReference>
<dbReference type="GO" id="GO:0019239">
    <property type="term" value="F:deaminase activity"/>
    <property type="evidence" value="ECO:0007669"/>
    <property type="project" value="TreeGrafter"/>
</dbReference>
<dbReference type="GO" id="GO:0019740">
    <property type="term" value="P:nitrogen utilization"/>
    <property type="evidence" value="ECO:0007669"/>
    <property type="project" value="UniProtKB-UniRule"/>
</dbReference>
<dbReference type="GO" id="GO:0006212">
    <property type="term" value="P:uracil catabolic process"/>
    <property type="evidence" value="ECO:0007669"/>
    <property type="project" value="UniProtKB-UniRule"/>
</dbReference>
<dbReference type="CDD" id="cd00448">
    <property type="entry name" value="YjgF_YER057c_UK114_family"/>
    <property type="match status" value="1"/>
</dbReference>
<dbReference type="Gene3D" id="3.30.1330.40">
    <property type="entry name" value="RutC-like"/>
    <property type="match status" value="1"/>
</dbReference>
<dbReference type="HAMAP" id="MF_00831">
    <property type="entry name" value="RutC"/>
    <property type="match status" value="1"/>
</dbReference>
<dbReference type="InterPro" id="IPR019898">
    <property type="entry name" value="RutC"/>
</dbReference>
<dbReference type="InterPro" id="IPR035959">
    <property type="entry name" value="RutC-like_sf"/>
</dbReference>
<dbReference type="InterPro" id="IPR006175">
    <property type="entry name" value="YjgF/YER057c/UK114"/>
</dbReference>
<dbReference type="NCBIfam" id="TIGR03610">
    <property type="entry name" value="RutC"/>
    <property type="match status" value="1"/>
</dbReference>
<dbReference type="PANTHER" id="PTHR11803">
    <property type="entry name" value="2-IMINOBUTANOATE/2-IMINOPROPANOATE DEAMINASE RIDA"/>
    <property type="match status" value="1"/>
</dbReference>
<dbReference type="PANTHER" id="PTHR11803:SF58">
    <property type="entry name" value="PROTEIN HMF1-RELATED"/>
    <property type="match status" value="1"/>
</dbReference>
<dbReference type="Pfam" id="PF01042">
    <property type="entry name" value="Ribonuc_L-PSP"/>
    <property type="match status" value="1"/>
</dbReference>
<dbReference type="SUPFAM" id="SSF55298">
    <property type="entry name" value="YjgF-like"/>
    <property type="match status" value="1"/>
</dbReference>
<name>RUTC_METEP</name>